<name>YCGL_SALNS</name>
<evidence type="ECO:0000255" key="1">
    <source>
        <dbReference type="HAMAP-Rule" id="MF_01866"/>
    </source>
</evidence>
<evidence type="ECO:0000256" key="2">
    <source>
        <dbReference type="SAM" id="MobiDB-lite"/>
    </source>
</evidence>
<evidence type="ECO:0000305" key="3"/>
<protein>
    <recommendedName>
        <fullName evidence="1">Protein YcgL</fullName>
    </recommendedName>
</protein>
<accession>B4SUK6</accession>
<comment type="sequence caution" evidence="3">
    <conflict type="erroneous initiation">
        <sequence resource="EMBL-CDS" id="ACF62545"/>
    </conflict>
</comment>
<feature type="chain" id="PRO_0000375355" description="Protein YcgL">
    <location>
        <begin position="1"/>
        <end position="110"/>
    </location>
</feature>
<feature type="domain" description="YcgL" evidence="1">
    <location>
        <begin position="14"/>
        <end position="98"/>
    </location>
</feature>
<feature type="region of interest" description="Disordered" evidence="2">
    <location>
        <begin position="87"/>
        <end position="110"/>
    </location>
</feature>
<feature type="compositionally biased region" description="Polar residues" evidence="2">
    <location>
        <begin position="97"/>
        <end position="110"/>
    </location>
</feature>
<organism>
    <name type="scientific">Salmonella newport (strain SL254)</name>
    <dbReference type="NCBI Taxonomy" id="423368"/>
    <lineage>
        <taxon>Bacteria</taxon>
        <taxon>Pseudomonadati</taxon>
        <taxon>Pseudomonadota</taxon>
        <taxon>Gammaproteobacteria</taxon>
        <taxon>Enterobacterales</taxon>
        <taxon>Enterobacteriaceae</taxon>
        <taxon>Salmonella</taxon>
    </lineage>
</organism>
<sequence length="110" mass="12575">MRQVTIPLIQSKSMFCVIYRSSKRDQTYLYVEKKDDFSRVPEALMKGFGQPQLAMMLPLDGRKKLVNAELEKVKQALSEQGYYLQLPPPPEDLLKQHLSSVGQNTSSADR</sequence>
<reference key="1">
    <citation type="journal article" date="2011" name="J. Bacteriol.">
        <title>Comparative genomics of 28 Salmonella enterica isolates: evidence for CRISPR-mediated adaptive sublineage evolution.</title>
        <authorList>
            <person name="Fricke W.F."/>
            <person name="Mammel M.K."/>
            <person name="McDermott P.F."/>
            <person name="Tartera C."/>
            <person name="White D.G."/>
            <person name="Leclerc J.E."/>
            <person name="Ravel J."/>
            <person name="Cebula T.A."/>
        </authorList>
    </citation>
    <scope>NUCLEOTIDE SEQUENCE [LARGE SCALE GENOMIC DNA]</scope>
    <source>
        <strain>SL254</strain>
    </source>
</reference>
<gene>
    <name evidence="1" type="primary">ycgL</name>
    <name type="ordered locus">SNSL254_A1953</name>
</gene>
<dbReference type="EMBL" id="CP001113">
    <property type="protein sequence ID" value="ACF62545.1"/>
    <property type="status" value="ALT_INIT"/>
    <property type="molecule type" value="Genomic_DNA"/>
</dbReference>
<dbReference type="SMR" id="B4SUK6"/>
<dbReference type="KEGG" id="see:SNSL254_A1953"/>
<dbReference type="HOGENOM" id="CLU_1873951_0_0_6"/>
<dbReference type="Proteomes" id="UP000008824">
    <property type="component" value="Chromosome"/>
</dbReference>
<dbReference type="Gene3D" id="3.10.510.20">
    <property type="entry name" value="YcgL domain"/>
    <property type="match status" value="1"/>
</dbReference>
<dbReference type="HAMAP" id="MF_01866">
    <property type="entry name" value="UPF0745"/>
    <property type="match status" value="1"/>
</dbReference>
<dbReference type="InterPro" id="IPR038068">
    <property type="entry name" value="YcgL-like_sf"/>
</dbReference>
<dbReference type="InterPro" id="IPR027354">
    <property type="entry name" value="YcgL_dom"/>
</dbReference>
<dbReference type="PANTHER" id="PTHR38109">
    <property type="entry name" value="PROTEIN YCGL"/>
    <property type="match status" value="1"/>
</dbReference>
<dbReference type="PANTHER" id="PTHR38109:SF1">
    <property type="entry name" value="PROTEIN YCGL"/>
    <property type="match status" value="1"/>
</dbReference>
<dbReference type="Pfam" id="PF05166">
    <property type="entry name" value="YcgL"/>
    <property type="match status" value="1"/>
</dbReference>
<dbReference type="SUPFAM" id="SSF160191">
    <property type="entry name" value="YcgL-like"/>
    <property type="match status" value="1"/>
</dbReference>
<dbReference type="PROSITE" id="PS51648">
    <property type="entry name" value="YCGL"/>
    <property type="match status" value="1"/>
</dbReference>
<proteinExistence type="inferred from homology"/>